<comment type="function">
    <text evidence="3 4 5 6">With ARX1, involved in proper assembly of pre-ribosomal particles during the biogenesis of the 60S ribosomal subunit. Accompanies the pre-60S particles to the cytoplasm.</text>
</comment>
<comment type="subunit">
    <text evidence="4">Component of the nucleoplasmic and cytoplasmic pre-60S ribosomal particles. Interacts directly with ARX1.</text>
</comment>
<comment type="interaction">
    <interactant intactId="EBI-26061">
        <id>P47019</id>
    </interactant>
    <interactant intactId="EBI-31385">
        <id>Q03862</id>
        <label>ARX1</label>
    </interactant>
    <organismsDiffer>false</organismsDiffer>
    <experiments>4</experiments>
</comment>
<comment type="subcellular location">
    <subcellularLocation>
        <location>Cytoplasm</location>
    </subcellularLocation>
    <subcellularLocation>
        <location>Nucleus</location>
    </subcellularLocation>
</comment>
<comment type="miscellaneous">
    <text evidence="2">Present with 4780 molecules/cell in log phase SD medium.</text>
</comment>
<comment type="similarity">
    <text evidence="7">Belongs to the ALB1 family.</text>
</comment>
<evidence type="ECO:0000256" key="1">
    <source>
        <dbReference type="SAM" id="MobiDB-lite"/>
    </source>
</evidence>
<evidence type="ECO:0000269" key="2">
    <source>
    </source>
</evidence>
<evidence type="ECO:0000269" key="3">
    <source>
    </source>
</evidence>
<evidence type="ECO:0000269" key="4">
    <source>
    </source>
</evidence>
<evidence type="ECO:0000269" key="5">
    <source>
    </source>
</evidence>
<evidence type="ECO:0000269" key="6">
    <source>
    </source>
</evidence>
<evidence type="ECO:0000305" key="7"/>
<gene>
    <name type="primary">ALB1</name>
    <name type="ordered locus">YJL122W</name>
    <name type="ORF">J0723</name>
</gene>
<sequence>MPSKNSINRPKLTSNLHHKVHSLNKKRAQRERAGLLKPARSSVNSKSGEIKSVALDLYFQNKKNESQNSTAVTLQNASSSPASITTRTLSKKRAKKIERNLKYATQRKLLVDASAKLEDEMDIDLDGGKKVKENEKKSSLTLVKEALWSVIDDTASQGLIIENGQGTTLGGPFFP</sequence>
<reference key="1">
    <citation type="journal article" date="1996" name="Yeast">
        <title>Sequencing analysis of a 40.2 kb fragment of yeast chromosome X reveals 19 open reading frames including URA2 (5' end), TRK1, PBS2, SPT10, GCD14, RPE1, PHO86, NCA3, ASF1, CCT7, GZF3, two tRNA genes, three remnant delta elements and a Ty4 transposon.</title>
        <authorList>
            <person name="Cziepluch C."/>
            <person name="Kordes E."/>
            <person name="Pujol A."/>
            <person name="Jauniaux J.-C."/>
        </authorList>
    </citation>
    <scope>NUCLEOTIDE SEQUENCE [GENOMIC DNA]</scope>
    <source>
        <strain>ATCC 96604 / S288c / FY1679</strain>
    </source>
</reference>
<reference key="2">
    <citation type="journal article" date="1996" name="EMBO J.">
        <title>Complete nucleotide sequence of Saccharomyces cerevisiae chromosome X.</title>
        <authorList>
            <person name="Galibert F."/>
            <person name="Alexandraki D."/>
            <person name="Baur A."/>
            <person name="Boles E."/>
            <person name="Chalwatzis N."/>
            <person name="Chuat J.-C."/>
            <person name="Coster F."/>
            <person name="Cziepluch C."/>
            <person name="de Haan M."/>
            <person name="Domdey H."/>
            <person name="Durand P."/>
            <person name="Entian K.-D."/>
            <person name="Gatius M."/>
            <person name="Goffeau A."/>
            <person name="Grivell L.A."/>
            <person name="Hennemann A."/>
            <person name="Herbert C.J."/>
            <person name="Heumann K."/>
            <person name="Hilger F."/>
            <person name="Hollenberg C.P."/>
            <person name="Huang M.-E."/>
            <person name="Jacq C."/>
            <person name="Jauniaux J.-C."/>
            <person name="Katsoulou C."/>
            <person name="Kirchrath L."/>
            <person name="Kleine K."/>
            <person name="Kordes E."/>
            <person name="Koetter P."/>
            <person name="Liebl S."/>
            <person name="Louis E.J."/>
            <person name="Manus V."/>
            <person name="Mewes H.-W."/>
            <person name="Miosga T."/>
            <person name="Obermaier B."/>
            <person name="Perea J."/>
            <person name="Pohl T.M."/>
            <person name="Portetelle D."/>
            <person name="Pujol A."/>
            <person name="Purnelle B."/>
            <person name="Ramezani Rad M."/>
            <person name="Rasmussen S.W."/>
            <person name="Rose M."/>
            <person name="Rossau R."/>
            <person name="Schaaff-Gerstenschlaeger I."/>
            <person name="Smits P.H.M."/>
            <person name="Scarcez T."/>
            <person name="Soriano N."/>
            <person name="To Van D."/>
            <person name="Tzermia M."/>
            <person name="Van Broekhoven A."/>
            <person name="Vandenbol M."/>
            <person name="Wedler H."/>
            <person name="von Wettstein D."/>
            <person name="Wambutt R."/>
            <person name="Zagulski M."/>
            <person name="Zollner A."/>
            <person name="Karpfinger-Hartl L."/>
        </authorList>
    </citation>
    <scope>NUCLEOTIDE SEQUENCE [LARGE SCALE GENOMIC DNA]</scope>
    <source>
        <strain>ATCC 204508 / S288c</strain>
    </source>
</reference>
<reference key="3">
    <citation type="journal article" date="2014" name="G3 (Bethesda)">
        <title>The reference genome sequence of Saccharomyces cerevisiae: Then and now.</title>
        <authorList>
            <person name="Engel S.R."/>
            <person name="Dietrich F.S."/>
            <person name="Fisk D.G."/>
            <person name="Binkley G."/>
            <person name="Balakrishnan R."/>
            <person name="Costanzo M.C."/>
            <person name="Dwight S.S."/>
            <person name="Hitz B.C."/>
            <person name="Karra K."/>
            <person name="Nash R.S."/>
            <person name="Weng S."/>
            <person name="Wong E.D."/>
            <person name="Lloyd P."/>
            <person name="Skrzypek M.S."/>
            <person name="Miyasato S.R."/>
            <person name="Simison M."/>
            <person name="Cherry J.M."/>
        </authorList>
    </citation>
    <scope>GENOME REANNOTATION</scope>
    <source>
        <strain>ATCC 204508 / S288c</strain>
    </source>
</reference>
<reference key="4">
    <citation type="journal article" date="2003" name="Nature">
        <title>Global analysis of protein localization in budding yeast.</title>
        <authorList>
            <person name="Huh W.-K."/>
            <person name="Falvo J.V."/>
            <person name="Gerke L.C."/>
            <person name="Carroll A.S."/>
            <person name="Howson R.W."/>
            <person name="Weissman J.S."/>
            <person name="O'Shea E.K."/>
        </authorList>
    </citation>
    <scope>SUBCELLULAR LOCATION [LARGE SCALE ANALYSIS]</scope>
</reference>
<reference key="5">
    <citation type="journal article" date="2003" name="Nature">
        <title>Global analysis of protein expression in yeast.</title>
        <authorList>
            <person name="Ghaemmaghami S."/>
            <person name="Huh W.-K."/>
            <person name="Bower K."/>
            <person name="Howson R.W."/>
            <person name="Belle A."/>
            <person name="Dephoure N."/>
            <person name="O'Shea E.K."/>
            <person name="Weissman J.S."/>
        </authorList>
    </citation>
    <scope>LEVEL OF PROTEIN EXPRESSION [LARGE SCALE ANALYSIS]</scope>
</reference>
<reference key="6">
    <citation type="journal article" date="2006" name="Genes Dev.">
        <title>Systematic identification and functional screens of uncharacterized proteins associated with eukaryotic ribosomal complexes.</title>
        <authorList>
            <person name="Fleischer T.C."/>
            <person name="Weaver C.M."/>
            <person name="McAfee K.J."/>
            <person name="Jennings J.L."/>
            <person name="Link A.J."/>
        </authorList>
    </citation>
    <scope>COPURIFICATION WITH RIBOSOMAL COMPLEXES</scope>
    <scope>IDENTIFICATION BY MASS SPECTROMETRY</scope>
</reference>
<reference key="7">
    <citation type="journal article" date="2006" name="J. Cell Biol.">
        <title>A functional network involved in the recycling of nucleocytoplasmic pre-60S factors.</title>
        <authorList>
            <person name="Lebreton A."/>
            <person name="Saveanu C."/>
            <person name="Decourty L."/>
            <person name="Rain J.-C."/>
            <person name="Jacquier A."/>
            <person name="Fromont-Racine M."/>
        </authorList>
    </citation>
    <scope>FUNCTION</scope>
    <scope>SUBCELLULAR LOCATION</scope>
    <scope>IDENTIFICATION IN THE PRE-60S RIBOSOME</scope>
    <scope>INTERACTION WITH ARX1</scope>
</reference>
<reference key="8">
    <citation type="journal article" date="2006" name="Yeast">
        <title>The budding yeast rRNA and ribosome biosynthesis (RRB) regulon contains over 200 genes.</title>
        <authorList>
            <person name="Wade C.H."/>
            <person name="Umbarger M.A."/>
            <person name="McAlear M.A."/>
        </authorList>
    </citation>
    <scope>FUNCTION</scope>
</reference>
<reference key="9">
    <citation type="journal article" date="2007" name="Proc. Natl. Acad. Sci. U.S.A.">
        <title>The specialized cytosolic J-protein, Jjj1, functions in 60S ribosomal subunit biogenesis.</title>
        <authorList>
            <person name="Meyer A.E."/>
            <person name="Hung N.-J."/>
            <person name="Yang P."/>
            <person name="Johnson A.W."/>
            <person name="Craig E.A."/>
        </authorList>
    </citation>
    <scope>FUNCTION</scope>
</reference>
<reference key="10">
    <citation type="journal article" date="2007" name="RNA">
        <title>The Hsp40 chaperone Jjj1 is required for the nucleo-cytoplasmic recycling of preribosomal factors in Saccharomyces cerevisiae.</title>
        <authorList>
            <person name="Demoinet E."/>
            <person name="Jacquier A."/>
            <person name="Lutfalla G."/>
            <person name="Fromont-Racine M."/>
        </authorList>
    </citation>
    <scope>FUNCTION</scope>
    <scope>SUBCELLULAR LOCATION</scope>
</reference>
<reference key="11">
    <citation type="journal article" date="2009" name="Science">
        <title>Global analysis of Cdk1 substrate phosphorylation sites provides insights into evolution.</title>
        <authorList>
            <person name="Holt L.J."/>
            <person name="Tuch B.B."/>
            <person name="Villen J."/>
            <person name="Johnson A.D."/>
            <person name="Gygi S.P."/>
            <person name="Morgan D.O."/>
        </authorList>
    </citation>
    <scope>IDENTIFICATION BY MASS SPECTROMETRY [LARGE SCALE ANALYSIS]</scope>
</reference>
<keyword id="KW-0002">3D-structure</keyword>
<keyword id="KW-0963">Cytoplasm</keyword>
<keyword id="KW-0539">Nucleus</keyword>
<keyword id="KW-1185">Reference proteome</keyword>
<keyword id="KW-0690">Ribosome biogenesis</keyword>
<keyword id="KW-0813">Transport</keyword>
<feature type="chain" id="PRO_0000203041" description="Ribosome biogenesis protein ALB1">
    <location>
        <begin position="1"/>
        <end position="175"/>
    </location>
</feature>
<feature type="region of interest" description="Disordered" evidence="1">
    <location>
        <begin position="1"/>
        <end position="43"/>
    </location>
</feature>
<feature type="region of interest" description="Disordered" evidence="1">
    <location>
        <begin position="72"/>
        <end position="91"/>
    </location>
</feature>
<feature type="compositionally biased region" description="Polar residues" evidence="1">
    <location>
        <begin position="1"/>
        <end position="15"/>
    </location>
</feature>
<feature type="compositionally biased region" description="Basic residues" evidence="1">
    <location>
        <begin position="16"/>
        <end position="29"/>
    </location>
</feature>
<feature type="compositionally biased region" description="Polar residues" evidence="1">
    <location>
        <begin position="72"/>
        <end position="88"/>
    </location>
</feature>
<dbReference type="EMBL" id="Z49397">
    <property type="protein sequence ID" value="CAA89417.1"/>
    <property type="molecule type" value="Genomic_DNA"/>
</dbReference>
<dbReference type="EMBL" id="BK006943">
    <property type="protein sequence ID" value="DAA08680.1"/>
    <property type="molecule type" value="Genomic_DNA"/>
</dbReference>
<dbReference type="PIR" id="S56903">
    <property type="entry name" value="S56903"/>
</dbReference>
<dbReference type="RefSeq" id="NP_012413.1">
    <property type="nucleotide sequence ID" value="NM_001181555.1"/>
</dbReference>
<dbReference type="PDB" id="6YLG">
    <property type="method" value="EM"/>
    <property type="resolution" value="3.00 A"/>
    <property type="chains" value="c=1-175"/>
</dbReference>
<dbReference type="PDB" id="6YLH">
    <property type="method" value="EM"/>
    <property type="resolution" value="3.10 A"/>
    <property type="chains" value="c=1-175"/>
</dbReference>
<dbReference type="PDB" id="7UG6">
    <property type="method" value="EM"/>
    <property type="resolution" value="2.90 A"/>
    <property type="chains" value="c=1-175"/>
</dbReference>
<dbReference type="PDB" id="7UOO">
    <property type="method" value="EM"/>
    <property type="resolution" value="2.34 A"/>
    <property type="chains" value="9=1-175"/>
</dbReference>
<dbReference type="PDB" id="7UQB">
    <property type="method" value="EM"/>
    <property type="resolution" value="2.43 A"/>
    <property type="chains" value="9=1-175"/>
</dbReference>
<dbReference type="PDB" id="7UQZ">
    <property type="method" value="EM"/>
    <property type="resolution" value="2.44 A"/>
    <property type="chains" value="9=1-175"/>
</dbReference>
<dbReference type="PDB" id="7V08">
    <property type="method" value="EM"/>
    <property type="resolution" value="2.36 A"/>
    <property type="chains" value="9=1-175"/>
</dbReference>
<dbReference type="PDB" id="8HFR">
    <property type="method" value="EM"/>
    <property type="resolution" value="2.64 A"/>
    <property type="chains" value="qJ=1-175"/>
</dbReference>
<dbReference type="PDBsum" id="6YLG"/>
<dbReference type="PDBsum" id="6YLH"/>
<dbReference type="PDBsum" id="7UG6"/>
<dbReference type="PDBsum" id="7UOO"/>
<dbReference type="PDBsum" id="7UQB"/>
<dbReference type="PDBsum" id="7UQZ"/>
<dbReference type="PDBsum" id="7V08"/>
<dbReference type="PDBsum" id="8HFR"/>
<dbReference type="EMDB" id="EMD-10838"/>
<dbReference type="EMDB" id="EMD-10839"/>
<dbReference type="EMDB" id="EMD-26485"/>
<dbReference type="EMDB" id="EMD-3151"/>
<dbReference type="EMDB" id="EMD-3152"/>
<dbReference type="EMDB" id="EMD-34725"/>
<dbReference type="SMR" id="P47019"/>
<dbReference type="BioGRID" id="33634">
    <property type="interactions" value="158"/>
</dbReference>
<dbReference type="DIP" id="DIP-6452N"/>
<dbReference type="FunCoup" id="P47019">
    <property type="interactions" value="298"/>
</dbReference>
<dbReference type="IntAct" id="P47019">
    <property type="interactions" value="88"/>
</dbReference>
<dbReference type="MINT" id="P47019"/>
<dbReference type="STRING" id="4932.YJL122W"/>
<dbReference type="iPTMnet" id="P47019"/>
<dbReference type="PaxDb" id="4932-YJL122W"/>
<dbReference type="PeptideAtlas" id="P47019"/>
<dbReference type="EnsemblFungi" id="YJL122W_mRNA">
    <property type="protein sequence ID" value="YJL122W"/>
    <property type="gene ID" value="YJL122W"/>
</dbReference>
<dbReference type="GeneID" id="853320"/>
<dbReference type="KEGG" id="sce:YJL122W"/>
<dbReference type="AGR" id="SGD:S000003658"/>
<dbReference type="SGD" id="S000003658">
    <property type="gene designation" value="ALB1"/>
</dbReference>
<dbReference type="VEuPathDB" id="FungiDB:YJL122W"/>
<dbReference type="eggNOG" id="ENOG502S14D">
    <property type="taxonomic scope" value="Eukaryota"/>
</dbReference>
<dbReference type="HOGENOM" id="CLU_103824_0_0_1"/>
<dbReference type="InParanoid" id="P47019"/>
<dbReference type="OMA" id="HHKVHSL"/>
<dbReference type="OrthoDB" id="4086742at2759"/>
<dbReference type="BioCyc" id="YEAST:G3O-31573-MONOMER"/>
<dbReference type="BioGRID-ORCS" id="853320">
    <property type="hits" value="0 hits in 10 CRISPR screens"/>
</dbReference>
<dbReference type="PRO" id="PR:P47019"/>
<dbReference type="Proteomes" id="UP000002311">
    <property type="component" value="Chromosome X"/>
</dbReference>
<dbReference type="RNAct" id="P47019">
    <property type="molecule type" value="protein"/>
</dbReference>
<dbReference type="GO" id="GO:0005737">
    <property type="term" value="C:cytoplasm"/>
    <property type="evidence" value="ECO:0000314"/>
    <property type="project" value="SGD"/>
</dbReference>
<dbReference type="GO" id="GO:0005634">
    <property type="term" value="C:nucleus"/>
    <property type="evidence" value="ECO:0000314"/>
    <property type="project" value="SGD"/>
</dbReference>
<dbReference type="GO" id="GO:0042273">
    <property type="term" value="P:ribosomal large subunit biogenesis"/>
    <property type="evidence" value="ECO:0000316"/>
    <property type="project" value="SGD"/>
</dbReference>
<dbReference type="InterPro" id="IPR022784">
    <property type="entry name" value="Ribosome_bgen_Alb1"/>
</dbReference>
<dbReference type="Pfam" id="PF09135">
    <property type="entry name" value="Alb1"/>
    <property type="match status" value="1"/>
</dbReference>
<name>ALB1_YEAST</name>
<proteinExistence type="evidence at protein level"/>
<protein>
    <recommendedName>
        <fullName>Ribosome biogenesis protein ALB1</fullName>
    </recommendedName>
</protein>
<organism>
    <name type="scientific">Saccharomyces cerevisiae (strain ATCC 204508 / S288c)</name>
    <name type="common">Baker's yeast</name>
    <dbReference type="NCBI Taxonomy" id="559292"/>
    <lineage>
        <taxon>Eukaryota</taxon>
        <taxon>Fungi</taxon>
        <taxon>Dikarya</taxon>
        <taxon>Ascomycota</taxon>
        <taxon>Saccharomycotina</taxon>
        <taxon>Saccharomycetes</taxon>
        <taxon>Saccharomycetales</taxon>
        <taxon>Saccharomycetaceae</taxon>
        <taxon>Saccharomyces</taxon>
    </lineage>
</organism>
<accession>P47019</accession>
<accession>D6VW64</accession>